<sequence>MNIEFSNIEARVIGCLMEKELTTPDLYPLTLNSLTNACNQKSNRDPVMLLSEAEVLDAVDALIEKRLINDESGFHGRVTKYRHRFCNTEFGNFQFTGQEKGIICCMLLRGAQTPGELRTRSHRLCQFIDVKEVENVLDKLVQDSLVVKLPREAGKRDSRYMHQFSGEVDLAEVPLTVAPVSEVVQGDDRIEQLEKDLSALKNEVSELRYLIEQRL</sequence>
<comment type="similarity">
    <text evidence="1">Belongs to the UPF0502 family.</text>
</comment>
<protein>
    <recommendedName>
        <fullName evidence="1">UPF0502 protein Ping_1905</fullName>
    </recommendedName>
</protein>
<accession>A1SW15</accession>
<dbReference type="EMBL" id="CP000510">
    <property type="protein sequence ID" value="ABM03680.1"/>
    <property type="molecule type" value="Genomic_DNA"/>
</dbReference>
<dbReference type="RefSeq" id="WP_011770240.1">
    <property type="nucleotide sequence ID" value="NC_008709.1"/>
</dbReference>
<dbReference type="SMR" id="A1SW15"/>
<dbReference type="STRING" id="357804.Ping_1905"/>
<dbReference type="KEGG" id="pin:Ping_1905"/>
<dbReference type="eggNOG" id="COG3132">
    <property type="taxonomic scope" value="Bacteria"/>
</dbReference>
<dbReference type="HOGENOM" id="CLU_057831_2_0_6"/>
<dbReference type="OrthoDB" id="9784785at2"/>
<dbReference type="Proteomes" id="UP000000639">
    <property type="component" value="Chromosome"/>
</dbReference>
<dbReference type="Gene3D" id="1.10.10.10">
    <property type="entry name" value="Winged helix-like DNA-binding domain superfamily/Winged helix DNA-binding domain"/>
    <property type="match status" value="2"/>
</dbReference>
<dbReference type="HAMAP" id="MF_01584">
    <property type="entry name" value="UPF0502"/>
    <property type="match status" value="1"/>
</dbReference>
<dbReference type="InterPro" id="IPR007432">
    <property type="entry name" value="DUF480"/>
</dbReference>
<dbReference type="InterPro" id="IPR036388">
    <property type="entry name" value="WH-like_DNA-bd_sf"/>
</dbReference>
<dbReference type="InterPro" id="IPR036390">
    <property type="entry name" value="WH_DNA-bd_sf"/>
</dbReference>
<dbReference type="PANTHER" id="PTHR38768">
    <property type="entry name" value="UPF0502 PROTEIN YCEH"/>
    <property type="match status" value="1"/>
</dbReference>
<dbReference type="PANTHER" id="PTHR38768:SF1">
    <property type="entry name" value="UPF0502 PROTEIN YCEH"/>
    <property type="match status" value="1"/>
</dbReference>
<dbReference type="Pfam" id="PF04337">
    <property type="entry name" value="DUF480"/>
    <property type="match status" value="1"/>
</dbReference>
<dbReference type="SUPFAM" id="SSF46785">
    <property type="entry name" value="Winged helix' DNA-binding domain"/>
    <property type="match status" value="2"/>
</dbReference>
<feature type="chain" id="PRO_0000309411" description="UPF0502 protein Ping_1905">
    <location>
        <begin position="1"/>
        <end position="215"/>
    </location>
</feature>
<evidence type="ECO:0000255" key="1">
    <source>
        <dbReference type="HAMAP-Rule" id="MF_01584"/>
    </source>
</evidence>
<name>Y1905_PSYIN</name>
<keyword id="KW-1185">Reference proteome</keyword>
<reference key="1">
    <citation type="journal article" date="2008" name="BMC Genomics">
        <title>Genomics of an extreme psychrophile, Psychromonas ingrahamii.</title>
        <authorList>
            <person name="Riley M."/>
            <person name="Staley J.T."/>
            <person name="Danchin A."/>
            <person name="Wang T.Z."/>
            <person name="Brettin T.S."/>
            <person name="Hauser L.J."/>
            <person name="Land M.L."/>
            <person name="Thompson L.S."/>
        </authorList>
    </citation>
    <scope>NUCLEOTIDE SEQUENCE [LARGE SCALE GENOMIC DNA]</scope>
    <source>
        <strain>DSM 17664 / CCUG 51855 / 37</strain>
    </source>
</reference>
<proteinExistence type="inferred from homology"/>
<organism>
    <name type="scientific">Psychromonas ingrahamii (strain DSM 17664 / CCUG 51855 / 37)</name>
    <dbReference type="NCBI Taxonomy" id="357804"/>
    <lineage>
        <taxon>Bacteria</taxon>
        <taxon>Pseudomonadati</taxon>
        <taxon>Pseudomonadota</taxon>
        <taxon>Gammaproteobacteria</taxon>
        <taxon>Alteromonadales</taxon>
        <taxon>Psychromonadaceae</taxon>
        <taxon>Psychromonas</taxon>
    </lineage>
</organism>
<gene>
    <name type="ordered locus">Ping_1905</name>
</gene>